<organism>
    <name type="scientific">Leptospira interrogans serogroup Icterohaemorrhagiae serovar Lai (strain 56601)</name>
    <dbReference type="NCBI Taxonomy" id="189518"/>
    <lineage>
        <taxon>Bacteria</taxon>
        <taxon>Pseudomonadati</taxon>
        <taxon>Spirochaetota</taxon>
        <taxon>Spirochaetia</taxon>
        <taxon>Leptospirales</taxon>
        <taxon>Leptospiraceae</taxon>
        <taxon>Leptospira</taxon>
    </lineage>
</organism>
<protein>
    <recommendedName>
        <fullName evidence="1">NAD-dependent protein deacylase</fullName>
        <ecNumber evidence="1 2">2.3.1.286</ecNumber>
    </recommendedName>
    <alternativeName>
        <fullName evidence="1">Regulatory protein SIR2 homolog</fullName>
    </alternativeName>
</protein>
<keyword id="KW-0963">Cytoplasm</keyword>
<keyword id="KW-0479">Metal-binding</keyword>
<keyword id="KW-0520">NAD</keyword>
<keyword id="KW-1185">Reference proteome</keyword>
<keyword id="KW-0808">Transferase</keyword>
<keyword id="KW-0862">Zinc</keyword>
<feature type="chain" id="PRO_0000110324" description="NAD-dependent protein deacylase">
    <location>
        <begin position="1"/>
        <end position="246"/>
    </location>
</feature>
<feature type="domain" description="Deacetylase sirtuin-type" evidence="2">
    <location>
        <begin position="1"/>
        <end position="245"/>
    </location>
</feature>
<feature type="active site" description="Proton acceptor" evidence="2">
    <location>
        <position position="116"/>
    </location>
</feature>
<feature type="binding site" evidence="1">
    <location>
        <begin position="20"/>
        <end position="39"/>
    </location>
    <ligand>
        <name>NAD(+)</name>
        <dbReference type="ChEBI" id="CHEBI:57540"/>
    </ligand>
</feature>
<feature type="binding site" evidence="1">
    <location>
        <position position="64"/>
    </location>
    <ligand>
        <name>substrate</name>
    </ligand>
</feature>
<feature type="binding site" evidence="1">
    <location>
        <position position="67"/>
    </location>
    <ligand>
        <name>substrate</name>
    </ligand>
</feature>
<feature type="binding site" evidence="1">
    <location>
        <begin position="98"/>
        <end position="101"/>
    </location>
    <ligand>
        <name>NAD(+)</name>
        <dbReference type="ChEBI" id="CHEBI:57540"/>
    </ligand>
</feature>
<feature type="binding site" evidence="1">
    <location>
        <position position="124"/>
    </location>
    <ligand>
        <name>Zn(2+)</name>
        <dbReference type="ChEBI" id="CHEBI:29105"/>
    </ligand>
</feature>
<feature type="binding site" evidence="1">
    <location>
        <position position="127"/>
    </location>
    <ligand>
        <name>Zn(2+)</name>
        <dbReference type="ChEBI" id="CHEBI:29105"/>
    </ligand>
</feature>
<feature type="binding site" evidence="1">
    <location>
        <position position="146"/>
    </location>
    <ligand>
        <name>Zn(2+)</name>
        <dbReference type="ChEBI" id="CHEBI:29105"/>
    </ligand>
</feature>
<feature type="binding site" evidence="1">
    <location>
        <position position="149"/>
    </location>
    <ligand>
        <name>Zn(2+)</name>
        <dbReference type="ChEBI" id="CHEBI:29105"/>
    </ligand>
</feature>
<feature type="binding site" evidence="1">
    <location>
        <begin position="186"/>
        <end position="188"/>
    </location>
    <ligand>
        <name>NAD(+)</name>
        <dbReference type="ChEBI" id="CHEBI:57540"/>
    </ligand>
</feature>
<feature type="binding site" evidence="1">
    <location>
        <begin position="212"/>
        <end position="214"/>
    </location>
    <ligand>
        <name>NAD(+)</name>
        <dbReference type="ChEBI" id="CHEBI:57540"/>
    </ligand>
</feature>
<feature type="binding site" evidence="1">
    <location>
        <position position="230"/>
    </location>
    <ligand>
        <name>NAD(+)</name>
        <dbReference type="ChEBI" id="CHEBI:57540"/>
    </ligand>
</feature>
<gene>
    <name evidence="1" type="primary">cobB</name>
    <name type="ordered locus">LA_2253</name>
</gene>
<proteinExistence type="inferred from homology"/>
<comment type="function">
    <text evidence="1">NAD-dependent lysine deacetylase and desuccinylase that specifically removes acetyl and succinyl groups on target proteins. Modulates the activities of several proteins which are inactive in their acylated form.</text>
</comment>
<comment type="catalytic activity">
    <reaction evidence="1">
        <text>N(6)-acetyl-L-lysyl-[protein] + NAD(+) + H2O = 2''-O-acetyl-ADP-D-ribose + nicotinamide + L-lysyl-[protein]</text>
        <dbReference type="Rhea" id="RHEA:43636"/>
        <dbReference type="Rhea" id="RHEA-COMP:9752"/>
        <dbReference type="Rhea" id="RHEA-COMP:10731"/>
        <dbReference type="ChEBI" id="CHEBI:15377"/>
        <dbReference type="ChEBI" id="CHEBI:17154"/>
        <dbReference type="ChEBI" id="CHEBI:29969"/>
        <dbReference type="ChEBI" id="CHEBI:57540"/>
        <dbReference type="ChEBI" id="CHEBI:61930"/>
        <dbReference type="ChEBI" id="CHEBI:83767"/>
        <dbReference type="EC" id="2.3.1.286"/>
    </reaction>
</comment>
<comment type="catalytic activity">
    <reaction evidence="1">
        <text>N(6)-succinyl-L-lysyl-[protein] + NAD(+) + H2O = 2''-O-succinyl-ADP-D-ribose + nicotinamide + L-lysyl-[protein]</text>
        <dbReference type="Rhea" id="RHEA:47668"/>
        <dbReference type="Rhea" id="RHEA-COMP:9752"/>
        <dbReference type="Rhea" id="RHEA-COMP:11877"/>
        <dbReference type="ChEBI" id="CHEBI:15377"/>
        <dbReference type="ChEBI" id="CHEBI:17154"/>
        <dbReference type="ChEBI" id="CHEBI:29969"/>
        <dbReference type="ChEBI" id="CHEBI:57540"/>
        <dbReference type="ChEBI" id="CHEBI:87830"/>
        <dbReference type="ChEBI" id="CHEBI:87832"/>
    </reaction>
</comment>
<comment type="cofactor">
    <cofactor evidence="1">
        <name>Zn(2+)</name>
        <dbReference type="ChEBI" id="CHEBI:29105"/>
    </cofactor>
    <text evidence="1">Binds 1 zinc ion per subunit.</text>
</comment>
<comment type="subcellular location">
    <subcellularLocation>
        <location evidence="1">Cytoplasm</location>
    </subcellularLocation>
</comment>
<comment type="domain">
    <text evidence="1">2 residues (Tyr-64 and Arg-67) present in a large hydrophobic pocket are probably involved in substrate specificity. They are important for desuccinylation activity, but dispensable for deacetylation activity.</text>
</comment>
<comment type="similarity">
    <text evidence="1">Belongs to the sirtuin family. Class III subfamily.</text>
</comment>
<accession>Q8F3Z6</accession>
<evidence type="ECO:0000255" key="1">
    <source>
        <dbReference type="HAMAP-Rule" id="MF_01121"/>
    </source>
</evidence>
<evidence type="ECO:0000255" key="2">
    <source>
        <dbReference type="PROSITE-ProRule" id="PRU00236"/>
    </source>
</evidence>
<reference key="1">
    <citation type="journal article" date="2003" name="Nature">
        <title>Unique physiological and pathogenic features of Leptospira interrogans revealed by whole-genome sequencing.</title>
        <authorList>
            <person name="Ren S.-X."/>
            <person name="Fu G."/>
            <person name="Jiang X.-G."/>
            <person name="Zeng R."/>
            <person name="Miao Y.-G."/>
            <person name="Xu H."/>
            <person name="Zhang Y.-X."/>
            <person name="Xiong H."/>
            <person name="Lu G."/>
            <person name="Lu L.-F."/>
            <person name="Jiang H.-Q."/>
            <person name="Jia J."/>
            <person name="Tu Y.-F."/>
            <person name="Jiang J.-X."/>
            <person name="Gu W.-Y."/>
            <person name="Zhang Y.-Q."/>
            <person name="Cai Z."/>
            <person name="Sheng H.-H."/>
            <person name="Yin H.-F."/>
            <person name="Zhang Y."/>
            <person name="Zhu G.-F."/>
            <person name="Wan M."/>
            <person name="Huang H.-L."/>
            <person name="Qian Z."/>
            <person name="Wang S.-Y."/>
            <person name="Ma W."/>
            <person name="Yao Z.-J."/>
            <person name="Shen Y."/>
            <person name="Qiang B.-Q."/>
            <person name="Xia Q.-C."/>
            <person name="Guo X.-K."/>
            <person name="Danchin A."/>
            <person name="Saint Girons I."/>
            <person name="Somerville R.L."/>
            <person name="Wen Y.-M."/>
            <person name="Shi M.-H."/>
            <person name="Chen Z."/>
            <person name="Xu J.-G."/>
            <person name="Zhao G.-P."/>
        </authorList>
    </citation>
    <scope>NUCLEOTIDE SEQUENCE [LARGE SCALE GENOMIC DNA]</scope>
    <source>
        <strain>56601</strain>
    </source>
</reference>
<name>NPD_LEPIN</name>
<dbReference type="EC" id="2.3.1.286" evidence="1 2"/>
<dbReference type="EMBL" id="AE010300">
    <property type="protein sequence ID" value="AAN49452.1"/>
    <property type="molecule type" value="Genomic_DNA"/>
</dbReference>
<dbReference type="RefSeq" id="NP_712434.1">
    <property type="nucleotide sequence ID" value="NC_004342.2"/>
</dbReference>
<dbReference type="RefSeq" id="WP_000657519.1">
    <property type="nucleotide sequence ID" value="NC_004342.2"/>
</dbReference>
<dbReference type="SMR" id="Q8F3Z6"/>
<dbReference type="FunCoup" id="Q8F3Z6">
    <property type="interactions" value="360"/>
</dbReference>
<dbReference type="STRING" id="189518.LA_2253"/>
<dbReference type="PaxDb" id="189518-LA_2253"/>
<dbReference type="EnsemblBacteria" id="AAN49452">
    <property type="protein sequence ID" value="AAN49452"/>
    <property type="gene ID" value="LA_2253"/>
</dbReference>
<dbReference type="KEGG" id="lil:LA_2253"/>
<dbReference type="PATRIC" id="fig|189518.3.peg.2241"/>
<dbReference type="HOGENOM" id="CLU_023643_3_1_12"/>
<dbReference type="InParanoid" id="Q8F3Z6"/>
<dbReference type="OrthoDB" id="9800582at2"/>
<dbReference type="Proteomes" id="UP000001408">
    <property type="component" value="Chromosome I"/>
</dbReference>
<dbReference type="GO" id="GO:0005737">
    <property type="term" value="C:cytoplasm"/>
    <property type="evidence" value="ECO:0007669"/>
    <property type="project" value="UniProtKB-SubCell"/>
</dbReference>
<dbReference type="GO" id="GO:0017136">
    <property type="term" value="F:histone deacetylase activity, NAD-dependent"/>
    <property type="evidence" value="ECO:0000318"/>
    <property type="project" value="GO_Central"/>
</dbReference>
<dbReference type="GO" id="GO:0070403">
    <property type="term" value="F:NAD+ binding"/>
    <property type="evidence" value="ECO:0000318"/>
    <property type="project" value="GO_Central"/>
</dbReference>
<dbReference type="GO" id="GO:0036054">
    <property type="term" value="F:protein-malonyllysine demalonylase activity"/>
    <property type="evidence" value="ECO:0007669"/>
    <property type="project" value="InterPro"/>
</dbReference>
<dbReference type="GO" id="GO:0036055">
    <property type="term" value="F:protein-succinyllysine desuccinylase activity"/>
    <property type="evidence" value="ECO:0007669"/>
    <property type="project" value="UniProtKB-UniRule"/>
</dbReference>
<dbReference type="GO" id="GO:0008270">
    <property type="term" value="F:zinc ion binding"/>
    <property type="evidence" value="ECO:0007669"/>
    <property type="project" value="UniProtKB-UniRule"/>
</dbReference>
<dbReference type="CDD" id="cd01412">
    <property type="entry name" value="SIRT5_Af1_CobB"/>
    <property type="match status" value="1"/>
</dbReference>
<dbReference type="Gene3D" id="3.30.1600.10">
    <property type="entry name" value="SIR2/SIRT2 'Small Domain"/>
    <property type="match status" value="1"/>
</dbReference>
<dbReference type="Gene3D" id="3.40.50.1220">
    <property type="entry name" value="TPP-binding domain"/>
    <property type="match status" value="1"/>
</dbReference>
<dbReference type="HAMAP" id="MF_01121">
    <property type="entry name" value="Sirtuin_ClassIII"/>
    <property type="match status" value="1"/>
</dbReference>
<dbReference type="InterPro" id="IPR029035">
    <property type="entry name" value="DHS-like_NAD/FAD-binding_dom"/>
</dbReference>
<dbReference type="InterPro" id="IPR050134">
    <property type="entry name" value="NAD-dep_sirtuin_deacylases"/>
</dbReference>
<dbReference type="InterPro" id="IPR003000">
    <property type="entry name" value="Sirtuin"/>
</dbReference>
<dbReference type="InterPro" id="IPR026591">
    <property type="entry name" value="Sirtuin_cat_small_dom_sf"/>
</dbReference>
<dbReference type="InterPro" id="IPR027546">
    <property type="entry name" value="Sirtuin_class_III"/>
</dbReference>
<dbReference type="InterPro" id="IPR026590">
    <property type="entry name" value="Ssirtuin_cat_dom"/>
</dbReference>
<dbReference type="NCBIfam" id="NF001753">
    <property type="entry name" value="PRK00481.1-3"/>
    <property type="match status" value="1"/>
</dbReference>
<dbReference type="PANTHER" id="PTHR11085:SF4">
    <property type="entry name" value="NAD-DEPENDENT PROTEIN DEACYLASE"/>
    <property type="match status" value="1"/>
</dbReference>
<dbReference type="PANTHER" id="PTHR11085">
    <property type="entry name" value="NAD-DEPENDENT PROTEIN DEACYLASE SIRTUIN-5, MITOCHONDRIAL-RELATED"/>
    <property type="match status" value="1"/>
</dbReference>
<dbReference type="Pfam" id="PF02146">
    <property type="entry name" value="SIR2"/>
    <property type="match status" value="1"/>
</dbReference>
<dbReference type="SUPFAM" id="SSF52467">
    <property type="entry name" value="DHS-like NAD/FAD-binding domain"/>
    <property type="match status" value="1"/>
</dbReference>
<dbReference type="PROSITE" id="PS50305">
    <property type="entry name" value="SIRTUIN"/>
    <property type="match status" value="1"/>
</dbReference>
<sequence length="246" mass="27663">MKEFITKHRDKFQKISAISGAGISAESGIPTFRGSEGLWKNFRAEDLATPQAFSKNPKLVWEWYLWRRNIIETKRPNPGHFALVELERIHPDFFLITQNVDGLHSQAGSKKLTEIHGNIFINRCISCGQESKETISENTTPLPPQCQNCNSFLRPGVVWFGESYDDFKLNLSIQRMKHTDLLLVLGTSGSVSMPVYLAQIAKDSGALLIEINPERSSFSSSVDLFLQGKTGEVLPELIREILDNPS</sequence>